<protein>
    <recommendedName>
        <fullName evidence="1">Small ribosomal subunit protein uS19</fullName>
    </recommendedName>
    <alternativeName>
        <fullName evidence="2">30S ribosomal protein S19</fullName>
    </alternativeName>
</protein>
<proteinExistence type="inferred from homology"/>
<reference key="1">
    <citation type="journal article" date="2008" name="Mol. Biol. Evol.">
        <title>Genome evolution of Wolbachia strain wPip from the Culex pipiens group.</title>
        <authorList>
            <person name="Klasson L."/>
            <person name="Walker T."/>
            <person name="Sebaihia M."/>
            <person name="Sanders M.J."/>
            <person name="Quail M.A."/>
            <person name="Lord A."/>
            <person name="Sanders S."/>
            <person name="Earl J."/>
            <person name="O'Neill S.L."/>
            <person name="Thomson N."/>
            <person name="Sinkins S.P."/>
            <person name="Parkhill J."/>
        </authorList>
    </citation>
    <scope>NUCLEOTIDE SEQUENCE [LARGE SCALE GENOMIC DNA]</scope>
    <source>
        <strain>wPip</strain>
    </source>
</reference>
<accession>B3CN30</accession>
<sequence length="94" mass="10573">MSRSVWKPPFLHPSVLRLVQRALKEGSINKVIKIHSRASVILPNCLGLKFAVYNGKDYIPVSVDNQNMIGHKFGEFSPTRKFTGHGGDKKATRR</sequence>
<name>RS19_WOLPP</name>
<gene>
    <name evidence="1" type="primary">rpsS</name>
    <name type="ordered locus">WP1170</name>
</gene>
<comment type="function">
    <text evidence="1">Protein S19 forms a complex with S13 that binds strongly to the 16S ribosomal RNA.</text>
</comment>
<comment type="similarity">
    <text evidence="1">Belongs to the universal ribosomal protein uS19 family.</text>
</comment>
<feature type="chain" id="PRO_1000128057" description="Small ribosomal subunit protein uS19">
    <location>
        <begin position="1"/>
        <end position="94"/>
    </location>
</feature>
<keyword id="KW-0687">Ribonucleoprotein</keyword>
<keyword id="KW-0689">Ribosomal protein</keyword>
<keyword id="KW-0694">RNA-binding</keyword>
<keyword id="KW-0699">rRNA-binding</keyword>
<evidence type="ECO:0000255" key="1">
    <source>
        <dbReference type="HAMAP-Rule" id="MF_00531"/>
    </source>
</evidence>
<evidence type="ECO:0000305" key="2"/>
<organism>
    <name type="scientific">Wolbachia pipientis subsp. Culex pipiens (strain wPip)</name>
    <dbReference type="NCBI Taxonomy" id="570417"/>
    <lineage>
        <taxon>Bacteria</taxon>
        <taxon>Pseudomonadati</taxon>
        <taxon>Pseudomonadota</taxon>
        <taxon>Alphaproteobacteria</taxon>
        <taxon>Rickettsiales</taxon>
        <taxon>Anaplasmataceae</taxon>
        <taxon>Wolbachieae</taxon>
        <taxon>Wolbachia</taxon>
    </lineage>
</organism>
<dbReference type="EMBL" id="AM999887">
    <property type="protein sequence ID" value="CAQ55278.1"/>
    <property type="molecule type" value="Genomic_DNA"/>
</dbReference>
<dbReference type="RefSeq" id="WP_010404687.1">
    <property type="nucleotide sequence ID" value="NC_010981.1"/>
</dbReference>
<dbReference type="SMR" id="B3CN30"/>
<dbReference type="KEGG" id="wpi:WP1170"/>
<dbReference type="eggNOG" id="COG0185">
    <property type="taxonomic scope" value="Bacteria"/>
</dbReference>
<dbReference type="HOGENOM" id="CLU_144911_0_1_5"/>
<dbReference type="Proteomes" id="UP000008814">
    <property type="component" value="Chromosome"/>
</dbReference>
<dbReference type="GO" id="GO:0005737">
    <property type="term" value="C:cytoplasm"/>
    <property type="evidence" value="ECO:0007669"/>
    <property type="project" value="UniProtKB-ARBA"/>
</dbReference>
<dbReference type="GO" id="GO:0015935">
    <property type="term" value="C:small ribosomal subunit"/>
    <property type="evidence" value="ECO:0007669"/>
    <property type="project" value="InterPro"/>
</dbReference>
<dbReference type="GO" id="GO:0019843">
    <property type="term" value="F:rRNA binding"/>
    <property type="evidence" value="ECO:0007669"/>
    <property type="project" value="UniProtKB-UniRule"/>
</dbReference>
<dbReference type="GO" id="GO:0003735">
    <property type="term" value="F:structural constituent of ribosome"/>
    <property type="evidence" value="ECO:0007669"/>
    <property type="project" value="InterPro"/>
</dbReference>
<dbReference type="GO" id="GO:0000028">
    <property type="term" value="P:ribosomal small subunit assembly"/>
    <property type="evidence" value="ECO:0007669"/>
    <property type="project" value="TreeGrafter"/>
</dbReference>
<dbReference type="GO" id="GO:0006412">
    <property type="term" value="P:translation"/>
    <property type="evidence" value="ECO:0007669"/>
    <property type="project" value="UniProtKB-UniRule"/>
</dbReference>
<dbReference type="FunFam" id="3.30.860.10:FF:000001">
    <property type="entry name" value="30S ribosomal protein S19"/>
    <property type="match status" value="1"/>
</dbReference>
<dbReference type="Gene3D" id="3.30.860.10">
    <property type="entry name" value="30s Ribosomal Protein S19, Chain A"/>
    <property type="match status" value="1"/>
</dbReference>
<dbReference type="HAMAP" id="MF_00531">
    <property type="entry name" value="Ribosomal_uS19"/>
    <property type="match status" value="1"/>
</dbReference>
<dbReference type="InterPro" id="IPR002222">
    <property type="entry name" value="Ribosomal_uS19"/>
</dbReference>
<dbReference type="InterPro" id="IPR005732">
    <property type="entry name" value="Ribosomal_uS19_bac-type"/>
</dbReference>
<dbReference type="InterPro" id="IPR023575">
    <property type="entry name" value="Ribosomal_uS19_SF"/>
</dbReference>
<dbReference type="NCBIfam" id="TIGR01050">
    <property type="entry name" value="rpsS_bact"/>
    <property type="match status" value="1"/>
</dbReference>
<dbReference type="PANTHER" id="PTHR11880">
    <property type="entry name" value="RIBOSOMAL PROTEIN S19P FAMILY MEMBER"/>
    <property type="match status" value="1"/>
</dbReference>
<dbReference type="PANTHER" id="PTHR11880:SF8">
    <property type="entry name" value="SMALL RIBOSOMAL SUBUNIT PROTEIN US19M"/>
    <property type="match status" value="1"/>
</dbReference>
<dbReference type="Pfam" id="PF00203">
    <property type="entry name" value="Ribosomal_S19"/>
    <property type="match status" value="1"/>
</dbReference>
<dbReference type="PIRSF" id="PIRSF002144">
    <property type="entry name" value="Ribosomal_S19"/>
    <property type="match status" value="1"/>
</dbReference>
<dbReference type="PRINTS" id="PR00975">
    <property type="entry name" value="RIBOSOMALS19"/>
</dbReference>
<dbReference type="SUPFAM" id="SSF54570">
    <property type="entry name" value="Ribosomal protein S19"/>
    <property type="match status" value="1"/>
</dbReference>